<reference key="1">
    <citation type="submission" date="2004-11" db="EMBL/GenBank/DDBJ databases">
        <authorList>
            <consortium name="The German cDNA consortium"/>
        </authorList>
    </citation>
    <scope>NUCLEOTIDE SEQUENCE [LARGE SCALE MRNA]</scope>
    <source>
        <tissue>Brain cortex</tissue>
    </source>
</reference>
<evidence type="ECO:0000250" key="1">
    <source>
        <dbReference type="UniProtKB" id="Q80TQ2"/>
    </source>
</evidence>
<evidence type="ECO:0000250" key="2">
    <source>
        <dbReference type="UniProtKB" id="Q9NQC7"/>
    </source>
</evidence>
<evidence type="ECO:0000255" key="3">
    <source>
        <dbReference type="PROSITE-ProRule" id="PRU00045"/>
    </source>
</evidence>
<evidence type="ECO:0000255" key="4">
    <source>
        <dbReference type="PROSITE-ProRule" id="PRU10092"/>
    </source>
</evidence>
<evidence type="ECO:0000256" key="5">
    <source>
        <dbReference type="SAM" id="MobiDB-lite"/>
    </source>
</evidence>
<evidence type="ECO:0000305" key="6"/>
<proteinExistence type="evidence at transcript level"/>
<protein>
    <recommendedName>
        <fullName>Ubiquitin carboxyl-terminal hydrolase CYLD</fullName>
        <ecNumber evidence="2">3.4.19.12</ecNumber>
    </recommendedName>
    <alternativeName>
        <fullName>Deubiquitinating enzyme CYLD</fullName>
    </alternativeName>
    <alternativeName>
        <fullName>Ubiquitin thioesterase CYLD</fullName>
    </alternativeName>
    <alternativeName>
        <fullName>Ubiquitin-specific-processing protease CYLD</fullName>
    </alternativeName>
</protein>
<keyword id="KW-1003">Cell membrane</keyword>
<keyword id="KW-0966">Cell projection</keyword>
<keyword id="KW-0963">Cytoplasm</keyword>
<keyword id="KW-0206">Cytoskeleton</keyword>
<keyword id="KW-0378">Hydrolase</keyword>
<keyword id="KW-0391">Immunity</keyword>
<keyword id="KW-0399">Innate immunity</keyword>
<keyword id="KW-0472">Membrane</keyword>
<keyword id="KW-0479">Metal-binding</keyword>
<keyword id="KW-0493">Microtubule</keyword>
<keyword id="KW-0597">Phosphoprotein</keyword>
<keyword id="KW-0645">Protease</keyword>
<keyword id="KW-1185">Reference proteome</keyword>
<keyword id="KW-0677">Repeat</keyword>
<keyword id="KW-0788">Thiol protease</keyword>
<keyword id="KW-0832">Ubl conjugation</keyword>
<keyword id="KW-0833">Ubl conjugation pathway</keyword>
<keyword id="KW-0879">Wnt signaling pathway</keyword>
<keyword id="KW-0862">Zinc</keyword>
<name>CYLD_PONAB</name>
<organism>
    <name type="scientific">Pongo abelii</name>
    <name type="common">Sumatran orangutan</name>
    <name type="synonym">Pongo pygmaeus abelii</name>
    <dbReference type="NCBI Taxonomy" id="9601"/>
    <lineage>
        <taxon>Eukaryota</taxon>
        <taxon>Metazoa</taxon>
        <taxon>Chordata</taxon>
        <taxon>Craniata</taxon>
        <taxon>Vertebrata</taxon>
        <taxon>Euteleostomi</taxon>
        <taxon>Mammalia</taxon>
        <taxon>Eutheria</taxon>
        <taxon>Euarchontoglires</taxon>
        <taxon>Primates</taxon>
        <taxon>Haplorrhini</taxon>
        <taxon>Catarrhini</taxon>
        <taxon>Hominidae</taxon>
        <taxon>Pongo</taxon>
    </lineage>
</organism>
<comment type="function">
    <text evidence="1 2">Deubiquitinase that specifically cleaves 'Lys-63'- and linear 'Met-1'-linked polyubiquitin chains and is involved in NF-kappa-B activation and TNF-alpha-induced necroptosis. Negatively regulates NF-kappa-B activation by deubiquitinating upstream signaling factors. Contributes to the regulation of cell survival, proliferation and differentiation via its effects on NF-kappa-B activation. Negative regulator of Wnt signaling. Inhibits HDAC6 and thereby promotes acetylation of alpha-tubulin and stabilization of microtubules. Plays a role in the regulation of microtubule dynamics, and thereby contributes to the regulation of cell proliferation, cell polarization, cell migration, and angiogenesis. Required for normal cell cycle progress and normal cytokinesis. Inhibits nuclear translocation of NF-kappa-B. Plays a role in the regulation of inflammation and the innate immune response, via its effects on NF-kappa-B activation (By similarity). Dispensable for the maturation of intrathymic natural killer cells, but required for the continued survival of immature natural killer cells. Negatively regulates TNFRSF11A signaling and osteoclastogenesis. Involved in the regulation of ciliogenesis, allowing ciliary basal bodies to migrate and dock to the plasma membrane; this process does not depend on NF-kappa-B activation (By similarity). Ability to remove linear ('Met-1'-linked) polyubiquitin chains regulates innate immunity and TNF-alpha-induced necroptosis: recruited to the LUBAC complex via interaction with SPATA2 and restricts linear polyubiquitin formation on target proteins. Regulates innate immunity by restricting linear polyubiquitin formation on RIPK2 in response to NOD2 stimulation (By similarity). Involved in TNF-alpha-induced necroptosis by removing linear ('Met-1'-linked) polyubiquitin chains from RIPK1, thereby regulating the kinase activity of RIPK1 (By similarity). Negatively regulates intestinal inflammation by removing 'Lys-63' linked polyubiquitin chain of NLRP6, thereby reducing the interaction between NLRP6 and PYCARD/ASC and formation of the NLRP6 inflammasome (By similarity). Does not catalyze deubiquitination of heterotypic 'Lys-63'-/'Lys-48'-linked branched ubiquitin chains (By similarity). Removes 'Lys-63' linked polyubiquitin chain of MAP3K7, which inhibits phosphorylation and blocks downstream activation of the JNK-p38 kinase cascades (By similarity). Also removes 'Lys-63'-linked polyubiquitin chains of MAP3K1 and MA3P3K3, which inhibit their interaction with MAP2K1 and MAP2K2 (By similarity).</text>
</comment>
<comment type="catalytic activity">
    <reaction evidence="2">
        <text>Thiol-dependent hydrolysis of ester, thioester, amide, peptide and isopeptide bonds formed by the C-terminal Gly of ubiquitin (a 76-residue protein attached to proteins as an intracellular targeting signal).</text>
        <dbReference type="EC" id="3.4.19.12"/>
    </reaction>
</comment>
<comment type="subunit">
    <text evidence="1 2">Interacts (via CAP-Gly domain) with IKBKG/NEMO (via proline-rich C-terminal region). Interacts with TRAF2 and TRIP. Interacts with PLK1, DVL1, DVL3, MAVS, TBK1, IKKE and RIGI. Interacts (via CAP-Gly domain) with microtubules. Interacts with HDAC6 and BCL3 (By similarity). Interacts with MAP3K7. Identified in a complex with TRAF6 and SQSTM1 (By similarity). Interacts with OPTN and SQSTM1 (By similarity). Interacts with CEP350. Interacts with RNF31; the interaction is indirect and is mediated via SPATA2. Interacts with SPATA2 (via the PUB domain); the interaction is direct and recruits CYLD to the LUBAC complex, thereby regulating TNF-alpha-induced necroptosis (By similarity).</text>
</comment>
<comment type="subcellular location">
    <subcellularLocation>
        <location>Cytoplasm</location>
    </subcellularLocation>
    <subcellularLocation>
        <location>Cytoplasm</location>
        <location>Perinuclear region</location>
    </subcellularLocation>
    <subcellularLocation>
        <location>Cytoplasm</location>
        <location>Cytoskeleton</location>
    </subcellularLocation>
    <subcellularLocation>
        <location evidence="2">Cell membrane</location>
        <topology evidence="2">Peripheral membrane protein</topology>
        <orientation evidence="2">Cytoplasmic side</orientation>
    </subcellularLocation>
    <subcellularLocation>
        <location evidence="2">Cytoplasm</location>
        <location evidence="2">Cytoskeleton</location>
        <location evidence="2">Microtubule organizing center</location>
        <location evidence="2">Centrosome</location>
    </subcellularLocation>
    <subcellularLocation>
        <location evidence="2">Cytoplasm</location>
        <location evidence="2">Cytoskeleton</location>
        <location evidence="2">Spindle</location>
    </subcellularLocation>
    <subcellularLocation>
        <location evidence="1">Cytoplasm</location>
        <location evidence="1">Cytoskeleton</location>
        <location evidence="1">Cilium basal body</location>
    </subcellularLocation>
    <text evidence="1 2">Detected at the microtubule cytoskeleton during interphase (By similarity). Detected at the midbody during telophase (By similarity). During metaphase, it remains localized to the centrosome but is also present along the spindle (By similarity).</text>
</comment>
<comment type="PTM">
    <text evidence="2">Phosphorylated on several serine residues by IKKA and/or IKKB in response to immune stimuli. Phosphorylation requires IKBKG. Phosphorylation abolishes TRAF2 deubiquitination, interferes with the activation of Jun kinases, and strongly reduces CD40-dependent gene activation by NF-kappa-B (By similarity).</text>
</comment>
<comment type="PTM">
    <text evidence="1 2">Ubiquitinated. Polyubiquitinated in hepatocytes treated with palmitic acid. Ubiquitination is mediated by E3 ligase TRIM47 and leads to proteasomal degradation.</text>
</comment>
<comment type="similarity">
    <text evidence="6">Belongs to the peptidase C19 family.</text>
</comment>
<sequence>MSSGLWSQDKVTSPYWEERVFYLLLQECSVTDKQTQKLLKVPKGSIGQYIQDRSVGHSRIPSAKGKKNRIGLKILEQPHAVLFVDEKDVVEINEKFTELLLAITNCEERFSLFKNRNRLSKGLQIDVGCPVKVQLRSGEEKFPGVVRFRGPLLAERTVSGIFFGVELLEEGRGQGFTDGVYQGKQLFQCDEDCGVFVALDKLELIEDDDTALESDYAGPGDTMQVELPPLEINSRVSLKVGETIESGTVIFCDVLPGKESLGYFVGVDMDNPIGNWDGRFDGVQLCSFACVESTILLHINDIIPALSESVTQERRPPKLAFMSRGVGDKGSSSHNKPKATGSTSDPGNRNRSELFYTLNGSSVDSQPQSKSKNTWYIDEVAEDPAKSLTEISTDFDRSSPPLQPPPVNSLSTENRFHSLPFSLTKMPNTNGSIGHSPLSLSAQSVMEELNTAPVQESPPLAMPPGNSHGLEVGSLAEVKENPPFYGVIRWIGQPPGLNEVLAGLELEDECAGCTDGTFRGTRYFTCALKKALFVKLKSCRPDSRFASLQPVSNQIERCNSLAFGGYLSEVVEENTPPKMEKEGLEIMIGKKKGIQGHYNSCYLDSTLFCLFAFSSVLDTVLLRPKEKNDVEYYSETQELLRTEIVNPLRIYGYVCATKIMKLRKILEKVEAASGFTSEEKDPEEFLNILFHHILRVEPLLKIRSAGQKVQDCYFYQIFMEKNEKVGVPTIQQLLEWSFINSNLKFAEAPSCLIIQMPRFGKDFKLFKKIFPSLELNITDLLEDTPRQCRICGGLAMYECRECYDDPDISAGKIKQFCKTCNTQVHLHPKRLNHKYNPVSLPKDLPDWDWRHGCIPCQNMELFAVLCIETSHYVAFVKYGKDDSAWLFFDSMADRDGGQNGFNIPQVTPCPEVGEYLKMSLEDLHSLDSRRIQGCARRLLCDAYMCMYQSPTMSLYK</sequence>
<dbReference type="EC" id="3.4.19.12" evidence="2"/>
<dbReference type="EMBL" id="CR857591">
    <property type="protein sequence ID" value="CAH89869.1"/>
    <property type="molecule type" value="mRNA"/>
</dbReference>
<dbReference type="RefSeq" id="NP_001124871.1">
    <property type="nucleotide sequence ID" value="NM_001131399.1"/>
</dbReference>
<dbReference type="SMR" id="Q5RED8"/>
<dbReference type="FunCoup" id="Q5RED8">
    <property type="interactions" value="1517"/>
</dbReference>
<dbReference type="STRING" id="9601.ENSPPYP00000008294"/>
<dbReference type="MEROPS" id="C67.001"/>
<dbReference type="GeneID" id="100171734"/>
<dbReference type="KEGG" id="pon:100171734"/>
<dbReference type="CTD" id="1540"/>
<dbReference type="eggNOG" id="KOG3556">
    <property type="taxonomic scope" value="Eukaryota"/>
</dbReference>
<dbReference type="InParanoid" id="Q5RED8"/>
<dbReference type="OrthoDB" id="6287070at2759"/>
<dbReference type="Proteomes" id="UP000001595">
    <property type="component" value="Unplaced"/>
</dbReference>
<dbReference type="GO" id="GO:0005813">
    <property type="term" value="C:centrosome"/>
    <property type="evidence" value="ECO:0000250"/>
    <property type="project" value="UniProtKB"/>
</dbReference>
<dbReference type="GO" id="GO:0036064">
    <property type="term" value="C:ciliary basal body"/>
    <property type="evidence" value="ECO:0000250"/>
    <property type="project" value="UniProtKB"/>
</dbReference>
<dbReference type="GO" id="GO:0097542">
    <property type="term" value="C:ciliary tip"/>
    <property type="evidence" value="ECO:0000250"/>
    <property type="project" value="UniProtKB"/>
</dbReference>
<dbReference type="GO" id="GO:0005829">
    <property type="term" value="C:cytosol"/>
    <property type="evidence" value="ECO:0000250"/>
    <property type="project" value="UniProtKB"/>
</dbReference>
<dbReference type="GO" id="GO:0005874">
    <property type="term" value="C:microtubule"/>
    <property type="evidence" value="ECO:0007669"/>
    <property type="project" value="UniProtKB-KW"/>
</dbReference>
<dbReference type="GO" id="GO:0048471">
    <property type="term" value="C:perinuclear region of cytoplasm"/>
    <property type="evidence" value="ECO:0007669"/>
    <property type="project" value="UniProtKB-SubCell"/>
</dbReference>
<dbReference type="GO" id="GO:0005886">
    <property type="term" value="C:plasma membrane"/>
    <property type="evidence" value="ECO:0007669"/>
    <property type="project" value="UniProtKB-SubCell"/>
</dbReference>
<dbReference type="GO" id="GO:0005819">
    <property type="term" value="C:spindle"/>
    <property type="evidence" value="ECO:0000250"/>
    <property type="project" value="UniProtKB"/>
</dbReference>
<dbReference type="GO" id="GO:0004843">
    <property type="term" value="F:cysteine-type deubiquitinase activity"/>
    <property type="evidence" value="ECO:0000250"/>
    <property type="project" value="UniProtKB"/>
</dbReference>
<dbReference type="GO" id="GO:0061578">
    <property type="term" value="F:K63-linked deubiquitinase activity"/>
    <property type="evidence" value="ECO:0000250"/>
    <property type="project" value="UniProtKB"/>
</dbReference>
<dbReference type="GO" id="GO:0008270">
    <property type="term" value="F:zinc ion binding"/>
    <property type="evidence" value="ECO:0000250"/>
    <property type="project" value="UniProtKB"/>
</dbReference>
<dbReference type="GO" id="GO:0045087">
    <property type="term" value="P:innate immune response"/>
    <property type="evidence" value="ECO:0000250"/>
    <property type="project" value="UniProtKB"/>
</dbReference>
<dbReference type="GO" id="GO:0043124">
    <property type="term" value="P:negative regulation of canonical NF-kappaB signal transduction"/>
    <property type="evidence" value="ECO:0000250"/>
    <property type="project" value="UniProtKB"/>
</dbReference>
<dbReference type="GO" id="GO:0090090">
    <property type="term" value="P:negative regulation of canonical Wnt signaling pathway"/>
    <property type="evidence" value="ECO:0000250"/>
    <property type="project" value="UniProtKB"/>
</dbReference>
<dbReference type="GO" id="GO:0050728">
    <property type="term" value="P:negative regulation of inflammatory response"/>
    <property type="evidence" value="ECO:0000250"/>
    <property type="project" value="UniProtKB"/>
</dbReference>
<dbReference type="GO" id="GO:2000493">
    <property type="term" value="P:negative regulation of interleukin-18-mediated signaling pathway"/>
    <property type="evidence" value="ECO:0000250"/>
    <property type="project" value="UniProtKB"/>
</dbReference>
<dbReference type="GO" id="GO:0046329">
    <property type="term" value="P:negative regulation of JNK cascade"/>
    <property type="evidence" value="ECO:0000250"/>
    <property type="project" value="UniProtKB"/>
</dbReference>
<dbReference type="GO" id="GO:0032088">
    <property type="term" value="P:negative regulation of NF-kappaB transcription factor activity"/>
    <property type="evidence" value="ECO:0000250"/>
    <property type="project" value="UniProtKB"/>
</dbReference>
<dbReference type="GO" id="GO:1901223">
    <property type="term" value="P:negative regulation of non-canonical NF-kappaB signal transduction"/>
    <property type="evidence" value="ECO:0000250"/>
    <property type="project" value="UniProtKB"/>
</dbReference>
<dbReference type="GO" id="GO:1903753">
    <property type="term" value="P:negative regulation of p38MAPK cascade"/>
    <property type="evidence" value="ECO:0000250"/>
    <property type="project" value="UniProtKB"/>
</dbReference>
<dbReference type="GO" id="GO:0016579">
    <property type="term" value="P:protein deubiquitination"/>
    <property type="evidence" value="ECO:0000250"/>
    <property type="project" value="UniProtKB"/>
</dbReference>
<dbReference type="GO" id="GO:1990108">
    <property type="term" value="P:protein linear deubiquitination"/>
    <property type="evidence" value="ECO:0000250"/>
    <property type="project" value="UniProtKB"/>
</dbReference>
<dbReference type="GO" id="GO:0006508">
    <property type="term" value="P:proteolysis"/>
    <property type="evidence" value="ECO:0007669"/>
    <property type="project" value="UniProtKB-KW"/>
</dbReference>
<dbReference type="GO" id="GO:1902017">
    <property type="term" value="P:regulation of cilium assembly"/>
    <property type="evidence" value="ECO:0000250"/>
    <property type="project" value="UniProtKB"/>
</dbReference>
<dbReference type="GO" id="GO:0050727">
    <property type="term" value="P:regulation of inflammatory response"/>
    <property type="evidence" value="ECO:0000250"/>
    <property type="project" value="UniProtKB"/>
</dbReference>
<dbReference type="GO" id="GO:0010803">
    <property type="term" value="P:regulation of tumor necrosis factor-mediated signaling pathway"/>
    <property type="evidence" value="ECO:0000250"/>
    <property type="project" value="UniProtKB"/>
</dbReference>
<dbReference type="GO" id="GO:0016055">
    <property type="term" value="P:Wnt signaling pathway"/>
    <property type="evidence" value="ECO:0007669"/>
    <property type="project" value="UniProtKB-KW"/>
</dbReference>
<dbReference type="CDD" id="cd02670">
    <property type="entry name" value="Peptidase_C19N"/>
    <property type="match status" value="1"/>
</dbReference>
<dbReference type="FunFam" id="2.30.30.190:FF:000004">
    <property type="entry name" value="Putative ubiquitin carboxyl-terminal hydrolase CYLD"/>
    <property type="match status" value="1"/>
</dbReference>
<dbReference type="FunFam" id="2.30.30.190:FF:000006">
    <property type="entry name" value="Putative ubiquitin carboxyl-terminal hydrolase CYLD"/>
    <property type="match status" value="1"/>
</dbReference>
<dbReference type="FunFam" id="2.30.30.190:FF:000007">
    <property type="entry name" value="Putative ubiquitin carboxyl-terminal hydrolase CYLD"/>
    <property type="match status" value="1"/>
</dbReference>
<dbReference type="FunFam" id="3.90.70.10:FF:000009">
    <property type="entry name" value="Putative ubiquitin carboxyl-terminal hydrolase CYLD"/>
    <property type="match status" value="1"/>
</dbReference>
<dbReference type="Gene3D" id="2.30.30.190">
    <property type="entry name" value="CAP Gly-rich-like domain"/>
    <property type="match status" value="3"/>
</dbReference>
<dbReference type="Gene3D" id="3.90.70.10">
    <property type="entry name" value="Cysteine proteinases"/>
    <property type="match status" value="1"/>
</dbReference>
<dbReference type="InterPro" id="IPR036859">
    <property type="entry name" value="CAP-Gly_dom_sf"/>
</dbReference>
<dbReference type="InterPro" id="IPR000938">
    <property type="entry name" value="CAP-Gly_domain"/>
</dbReference>
<dbReference type="InterPro" id="IPR038765">
    <property type="entry name" value="Papain-like_cys_pep_sf"/>
</dbReference>
<dbReference type="InterPro" id="IPR001394">
    <property type="entry name" value="Peptidase_C19_UCH"/>
</dbReference>
<dbReference type="InterPro" id="IPR018200">
    <property type="entry name" value="USP_CS"/>
</dbReference>
<dbReference type="InterPro" id="IPR028889">
    <property type="entry name" value="USP_dom"/>
</dbReference>
<dbReference type="PANTHER" id="PTHR11830">
    <property type="entry name" value="40S RIBOSOMAL PROTEIN S3A"/>
    <property type="match status" value="1"/>
</dbReference>
<dbReference type="Pfam" id="PF01302">
    <property type="entry name" value="CAP_GLY"/>
    <property type="match status" value="2"/>
</dbReference>
<dbReference type="Pfam" id="PF16607">
    <property type="entry name" value="CYLD_phos_site"/>
    <property type="match status" value="1"/>
</dbReference>
<dbReference type="Pfam" id="PF00443">
    <property type="entry name" value="UCH"/>
    <property type="match status" value="1"/>
</dbReference>
<dbReference type="SMART" id="SM01052">
    <property type="entry name" value="CAP_GLY"/>
    <property type="match status" value="3"/>
</dbReference>
<dbReference type="SUPFAM" id="SSF74924">
    <property type="entry name" value="Cap-Gly domain"/>
    <property type="match status" value="3"/>
</dbReference>
<dbReference type="SUPFAM" id="SSF54001">
    <property type="entry name" value="Cysteine proteinases"/>
    <property type="match status" value="1"/>
</dbReference>
<dbReference type="PROSITE" id="PS00845">
    <property type="entry name" value="CAP_GLY_1"/>
    <property type="match status" value="1"/>
</dbReference>
<dbReference type="PROSITE" id="PS50245">
    <property type="entry name" value="CAP_GLY_2"/>
    <property type="match status" value="2"/>
</dbReference>
<dbReference type="PROSITE" id="PS00972">
    <property type="entry name" value="USP_1"/>
    <property type="match status" value="1"/>
</dbReference>
<dbReference type="PROSITE" id="PS50235">
    <property type="entry name" value="USP_3"/>
    <property type="match status" value="1"/>
</dbReference>
<accession>Q5RED8</accession>
<feature type="chain" id="PRO_0000326148" description="Ubiquitin carboxyl-terminal hydrolase CYLD">
    <location>
        <begin position="1"/>
        <end position="956"/>
    </location>
</feature>
<feature type="domain" description="CAP-Gly 1" evidence="3">
    <location>
        <begin position="153"/>
        <end position="198"/>
    </location>
</feature>
<feature type="domain" description="CAP-Gly 2" evidence="3">
    <location>
        <begin position="253"/>
        <end position="286"/>
    </location>
</feature>
<feature type="domain" description="CAP-Gly 3" evidence="3">
    <location>
        <begin position="492"/>
        <end position="535"/>
    </location>
</feature>
<feature type="domain" description="USP">
    <location>
        <begin position="592"/>
        <end position="950"/>
    </location>
</feature>
<feature type="region of interest" description="Interaction with TRIP" evidence="2">
    <location>
        <begin position="106"/>
        <end position="593"/>
    </location>
</feature>
<feature type="region of interest" description="Disordered" evidence="5">
    <location>
        <begin position="309"/>
        <end position="353"/>
    </location>
</feature>
<feature type="region of interest" description="Disordered" evidence="5">
    <location>
        <begin position="392"/>
        <end position="411"/>
    </location>
</feature>
<feature type="region of interest" description="Interaction with TRAF2" evidence="2">
    <location>
        <begin position="394"/>
        <end position="469"/>
    </location>
</feature>
<feature type="region of interest" description="Interaction with IKBKG/NEMO" evidence="2">
    <location>
        <begin position="470"/>
        <end position="684"/>
    </location>
</feature>
<feature type="region of interest" description="B-box" evidence="2">
    <location>
        <begin position="781"/>
        <end position="833"/>
    </location>
</feature>
<feature type="compositionally biased region" description="Polar residues" evidence="5">
    <location>
        <begin position="330"/>
        <end position="349"/>
    </location>
</feature>
<feature type="active site" description="Nucleophile" evidence="4">
    <location>
        <position position="601"/>
    </location>
</feature>
<feature type="active site" description="Proton acceptor" evidence="4">
    <location>
        <position position="871"/>
    </location>
</feature>
<feature type="binding site" evidence="2">
    <location>
        <position position="788"/>
    </location>
    <ligand>
        <name>Zn(2+)</name>
        <dbReference type="ChEBI" id="CHEBI:29105"/>
        <label>1</label>
    </ligand>
</feature>
<feature type="binding site" evidence="2">
    <location>
        <position position="791"/>
    </location>
    <ligand>
        <name>Zn(2+)</name>
        <dbReference type="ChEBI" id="CHEBI:29105"/>
        <label>1</label>
    </ligand>
</feature>
<feature type="binding site" evidence="2">
    <location>
        <position position="799"/>
    </location>
    <ligand>
        <name>Zn(2+)</name>
        <dbReference type="ChEBI" id="CHEBI:29105"/>
        <label>2</label>
    </ligand>
</feature>
<feature type="binding site" evidence="2">
    <location>
        <position position="802"/>
    </location>
    <ligand>
        <name>Zn(2+)</name>
        <dbReference type="ChEBI" id="CHEBI:29105"/>
        <label>2</label>
    </ligand>
</feature>
<feature type="binding site" evidence="2">
    <location>
        <position position="817"/>
    </location>
    <ligand>
        <name>Zn(2+)</name>
        <dbReference type="ChEBI" id="CHEBI:29105"/>
        <label>1</label>
    </ligand>
</feature>
<feature type="binding site" evidence="2">
    <location>
        <position position="820"/>
    </location>
    <ligand>
        <name>Zn(2+)</name>
        <dbReference type="ChEBI" id="CHEBI:29105"/>
        <label>1</label>
    </ligand>
</feature>
<feature type="binding site" evidence="2">
    <location>
        <position position="825"/>
    </location>
    <ligand>
        <name>Zn(2+)</name>
        <dbReference type="ChEBI" id="CHEBI:29105"/>
        <label>2</label>
    </ligand>
</feature>
<feature type="binding site" evidence="2">
    <location>
        <position position="833"/>
    </location>
    <ligand>
        <name>Zn(2+)</name>
        <dbReference type="ChEBI" id="CHEBI:29105"/>
        <label>2</label>
    </ligand>
</feature>
<feature type="modified residue" description="Phosphoserine" evidence="2">
    <location>
        <position position="387"/>
    </location>
</feature>
<feature type="modified residue" description="Phosphoserine" evidence="2">
    <location>
        <position position="418"/>
    </location>
</feature>
<feature type="modified residue" description="Phosphoserine" evidence="2">
    <location>
        <position position="422"/>
    </location>
</feature>
<gene>
    <name type="primary">CYLD</name>
    <name type="synonym">CYLD1</name>
</gene>